<accession>P23393</accession>
<reference key="1">
    <citation type="journal article" date="1991" name="Mol. Gen. Genet.">
        <title>Isolation and genetic structure of IS112, an insertion sequence responsible for the inactivation of the SalI restriction-modification system of Streptomyces albus G.</title>
        <authorList>
            <person name="Rodicio M.R."/>
            <person name="Alvarez M.A."/>
            <person name="Chater K.F."/>
        </authorList>
    </citation>
    <scope>NUCLEOTIDE SEQUENCE [GENOMIC DNA]</scope>
</reference>
<name>T112_STRAL</name>
<feature type="chain" id="PRO_0000173303" description="Putative transposase for insertion sequence element IS112">
    <location>
        <begin position="1"/>
        <end position="256"/>
    </location>
</feature>
<keyword id="KW-0233">DNA recombination</keyword>
<keyword id="KW-0238">DNA-binding</keyword>
<keyword id="KW-0814">Transposable element</keyword>
<keyword id="KW-0815">Transposition</keyword>
<sequence>MAGVITASEPSWIAPFSGLSPRQFGKLVTVLRREGADAVRKGRPWSLPLEDRALLVAAYWRTNLTMRQLAPLFGVSKSAADRIIDHLGPMLALQPRKRFAKDTVLIVDGTLVPTRDHTIAERSKNYRYSTNHQVVIDADTRLVVVVGRPLAGNRNDCKAWEESGAKAAVGKTLTIADGGYPGTGLVIPHRRERGQAGLPDWKEEHNKSHKQVRARVEHVFARMKTWKILRDCRLKGDGVHHAMLGIARMHNLALTG</sequence>
<comment type="function">
    <text>Involved in the transposition of the insertion sequence IS112 which inactivates the SalI restriction-modification system.</text>
</comment>
<comment type="similarity">
    <text evidence="1">Belongs to the transposase 11 family.</text>
</comment>
<organism>
    <name type="scientific">Streptomyces albus G</name>
    <dbReference type="NCBI Taxonomy" id="1962"/>
    <lineage>
        <taxon>Bacteria</taxon>
        <taxon>Bacillati</taxon>
        <taxon>Actinomycetota</taxon>
        <taxon>Actinomycetes</taxon>
        <taxon>Kitasatosporales</taxon>
        <taxon>Streptomycetaceae</taxon>
        <taxon>Streptomyces</taxon>
    </lineage>
</organism>
<protein>
    <recommendedName>
        <fullName>Putative transposase for insertion sequence element IS112</fullName>
    </recommendedName>
</protein>
<evidence type="ECO:0000305" key="1"/>
<proteinExistence type="inferred from homology"/>
<dbReference type="EMBL" id="X56644">
    <property type="protein sequence ID" value="CAA39965.1"/>
    <property type="molecule type" value="Genomic_DNA"/>
</dbReference>
<dbReference type="PIR" id="S13338">
    <property type="entry name" value="S13338"/>
</dbReference>
<dbReference type="GO" id="GO:0003677">
    <property type="term" value="F:DNA binding"/>
    <property type="evidence" value="ECO:0007669"/>
    <property type="project" value="UniProtKB-KW"/>
</dbReference>
<dbReference type="GO" id="GO:0004803">
    <property type="term" value="F:transposase activity"/>
    <property type="evidence" value="ECO:0007669"/>
    <property type="project" value="InterPro"/>
</dbReference>
<dbReference type="GO" id="GO:0006313">
    <property type="term" value="P:DNA transposition"/>
    <property type="evidence" value="ECO:0007669"/>
    <property type="project" value="InterPro"/>
</dbReference>
<dbReference type="InterPro" id="IPR002559">
    <property type="entry name" value="Transposase_11"/>
</dbReference>
<dbReference type="InterPro" id="IPR027805">
    <property type="entry name" value="Transposase_HTH_dom"/>
</dbReference>
<dbReference type="Pfam" id="PF01609">
    <property type="entry name" value="DDE_Tnp_1"/>
    <property type="match status" value="1"/>
</dbReference>
<dbReference type="Pfam" id="PF13613">
    <property type="entry name" value="HTH_Tnp_4"/>
    <property type="match status" value="1"/>
</dbReference>